<feature type="chain" id="PRO_1000134095" description="ATP synthase gamma chain">
    <location>
        <begin position="1"/>
        <end position="289"/>
    </location>
</feature>
<accession>B0VNK3</accession>
<dbReference type="EMBL" id="CU468230">
    <property type="protein sequence ID" value="CAO99573.1"/>
    <property type="molecule type" value="Genomic_DNA"/>
</dbReference>
<dbReference type="SMR" id="B0VNK3"/>
<dbReference type="KEGG" id="abm:ABSDF0169"/>
<dbReference type="HOGENOM" id="CLU_050669_0_1_6"/>
<dbReference type="Proteomes" id="UP000001741">
    <property type="component" value="Chromosome"/>
</dbReference>
<dbReference type="GO" id="GO:0005886">
    <property type="term" value="C:plasma membrane"/>
    <property type="evidence" value="ECO:0007669"/>
    <property type="project" value="UniProtKB-SubCell"/>
</dbReference>
<dbReference type="GO" id="GO:0045259">
    <property type="term" value="C:proton-transporting ATP synthase complex"/>
    <property type="evidence" value="ECO:0007669"/>
    <property type="project" value="UniProtKB-KW"/>
</dbReference>
<dbReference type="GO" id="GO:0005524">
    <property type="term" value="F:ATP binding"/>
    <property type="evidence" value="ECO:0007669"/>
    <property type="project" value="UniProtKB-UniRule"/>
</dbReference>
<dbReference type="GO" id="GO:0046933">
    <property type="term" value="F:proton-transporting ATP synthase activity, rotational mechanism"/>
    <property type="evidence" value="ECO:0007669"/>
    <property type="project" value="UniProtKB-UniRule"/>
</dbReference>
<dbReference type="GO" id="GO:0042777">
    <property type="term" value="P:proton motive force-driven plasma membrane ATP synthesis"/>
    <property type="evidence" value="ECO:0007669"/>
    <property type="project" value="UniProtKB-UniRule"/>
</dbReference>
<dbReference type="CDD" id="cd12151">
    <property type="entry name" value="F1-ATPase_gamma"/>
    <property type="match status" value="1"/>
</dbReference>
<dbReference type="FunFam" id="1.10.287.80:FF:000005">
    <property type="entry name" value="ATP synthase gamma chain"/>
    <property type="match status" value="1"/>
</dbReference>
<dbReference type="Gene3D" id="3.40.1380.10">
    <property type="match status" value="1"/>
</dbReference>
<dbReference type="Gene3D" id="1.10.287.80">
    <property type="entry name" value="ATP synthase, gamma subunit, helix hairpin domain"/>
    <property type="match status" value="1"/>
</dbReference>
<dbReference type="HAMAP" id="MF_00815">
    <property type="entry name" value="ATP_synth_gamma_bact"/>
    <property type="match status" value="1"/>
</dbReference>
<dbReference type="InterPro" id="IPR035968">
    <property type="entry name" value="ATP_synth_F1_ATPase_gsu"/>
</dbReference>
<dbReference type="InterPro" id="IPR000131">
    <property type="entry name" value="ATP_synth_F1_gsu"/>
</dbReference>
<dbReference type="InterPro" id="IPR023632">
    <property type="entry name" value="ATP_synth_F1_gsu_CS"/>
</dbReference>
<dbReference type="NCBIfam" id="TIGR01146">
    <property type="entry name" value="ATPsyn_F1gamma"/>
    <property type="match status" value="1"/>
</dbReference>
<dbReference type="NCBIfam" id="NF004144">
    <property type="entry name" value="PRK05621.1-1"/>
    <property type="match status" value="1"/>
</dbReference>
<dbReference type="PANTHER" id="PTHR11693">
    <property type="entry name" value="ATP SYNTHASE GAMMA CHAIN"/>
    <property type="match status" value="1"/>
</dbReference>
<dbReference type="PANTHER" id="PTHR11693:SF22">
    <property type="entry name" value="ATP SYNTHASE SUBUNIT GAMMA, MITOCHONDRIAL"/>
    <property type="match status" value="1"/>
</dbReference>
<dbReference type="Pfam" id="PF00231">
    <property type="entry name" value="ATP-synt"/>
    <property type="match status" value="1"/>
</dbReference>
<dbReference type="PRINTS" id="PR00126">
    <property type="entry name" value="ATPASEGAMMA"/>
</dbReference>
<dbReference type="SUPFAM" id="SSF52943">
    <property type="entry name" value="ATP synthase (F1-ATPase), gamma subunit"/>
    <property type="match status" value="1"/>
</dbReference>
<dbReference type="PROSITE" id="PS00153">
    <property type="entry name" value="ATPASE_GAMMA"/>
    <property type="match status" value="1"/>
</dbReference>
<gene>
    <name evidence="1" type="primary">atpG</name>
    <name type="ordered locus">ABSDF0169</name>
</gene>
<protein>
    <recommendedName>
        <fullName evidence="1">ATP synthase gamma chain</fullName>
    </recommendedName>
    <alternativeName>
        <fullName evidence="1">ATP synthase F1 sector gamma subunit</fullName>
    </alternativeName>
    <alternativeName>
        <fullName evidence="1">F-ATPase gamma subunit</fullName>
    </alternativeName>
</protein>
<evidence type="ECO:0000255" key="1">
    <source>
        <dbReference type="HAMAP-Rule" id="MF_00815"/>
    </source>
</evidence>
<reference key="1">
    <citation type="journal article" date="2008" name="PLoS ONE">
        <title>Comparative analysis of Acinetobacters: three genomes for three lifestyles.</title>
        <authorList>
            <person name="Vallenet D."/>
            <person name="Nordmann P."/>
            <person name="Barbe V."/>
            <person name="Poirel L."/>
            <person name="Mangenot S."/>
            <person name="Bataille E."/>
            <person name="Dossat C."/>
            <person name="Gas S."/>
            <person name="Kreimeyer A."/>
            <person name="Lenoble P."/>
            <person name="Oztas S."/>
            <person name="Poulain J."/>
            <person name="Segurens B."/>
            <person name="Robert C."/>
            <person name="Abergel C."/>
            <person name="Claverie J.-M."/>
            <person name="Raoult D."/>
            <person name="Medigue C."/>
            <person name="Weissenbach J."/>
            <person name="Cruveiller S."/>
        </authorList>
    </citation>
    <scope>NUCLEOTIDE SEQUENCE [LARGE SCALE GENOMIC DNA]</scope>
    <source>
        <strain>SDF</strain>
    </source>
</reference>
<sequence length="289" mass="32096">MANLKEIRAKVASIKSTQKITRAMQMVAASKMRRAQERMAQGRPYADNMRRVIAHLVQANPEYKHRYMVDRPVKRVGYIIVSSDRGLAGGLNINLFKKVVQHVKAQQEQSIEVQFALIGQKAVSFFKNYGGKVLGATTQIGDAPSLEQLTGSVQVMLDAFDKGELDRIYLVSNGFVNAMTQKPKVEQLVPLAPAEEGDDLNRTYGWDYIYEPEAEELLNGLLVRYIESMVYQGVIENVACEQSARMVAMKAATDNAGQLIKDLQLIYNKLRQAAITQEISEIVGGAAAV</sequence>
<comment type="function">
    <text evidence="1">Produces ATP from ADP in the presence of a proton gradient across the membrane. The gamma chain is believed to be important in regulating ATPase activity and the flow of protons through the CF(0) complex.</text>
</comment>
<comment type="subunit">
    <text evidence="1">F-type ATPases have 2 components, CF(1) - the catalytic core - and CF(0) - the membrane proton channel. CF(1) has five subunits: alpha(3), beta(3), gamma(1), delta(1), epsilon(1). CF(0) has three main subunits: a, b and c.</text>
</comment>
<comment type="subcellular location">
    <subcellularLocation>
        <location evidence="1">Cell inner membrane</location>
        <topology evidence="1">Peripheral membrane protein</topology>
    </subcellularLocation>
</comment>
<comment type="similarity">
    <text evidence="1">Belongs to the ATPase gamma chain family.</text>
</comment>
<proteinExistence type="inferred from homology"/>
<keyword id="KW-0066">ATP synthesis</keyword>
<keyword id="KW-0997">Cell inner membrane</keyword>
<keyword id="KW-1003">Cell membrane</keyword>
<keyword id="KW-0139">CF(1)</keyword>
<keyword id="KW-0375">Hydrogen ion transport</keyword>
<keyword id="KW-0406">Ion transport</keyword>
<keyword id="KW-0472">Membrane</keyword>
<keyword id="KW-0813">Transport</keyword>
<name>ATPG_ACIBS</name>
<organism>
    <name type="scientific">Acinetobacter baumannii (strain SDF)</name>
    <dbReference type="NCBI Taxonomy" id="509170"/>
    <lineage>
        <taxon>Bacteria</taxon>
        <taxon>Pseudomonadati</taxon>
        <taxon>Pseudomonadota</taxon>
        <taxon>Gammaproteobacteria</taxon>
        <taxon>Moraxellales</taxon>
        <taxon>Moraxellaceae</taxon>
        <taxon>Acinetobacter</taxon>
        <taxon>Acinetobacter calcoaceticus/baumannii complex</taxon>
    </lineage>
</organism>